<proteinExistence type="inferred from homology"/>
<comment type="subunit">
    <text evidence="1">Part of the 50S ribosomal subunit. Contacts protein L32.</text>
</comment>
<comment type="similarity">
    <text evidence="1">Belongs to the bacterial ribosomal protein bL17 family.</text>
</comment>
<organism>
    <name type="scientific">Mycobacterium leprae (strain Br4923)</name>
    <dbReference type="NCBI Taxonomy" id="561304"/>
    <lineage>
        <taxon>Bacteria</taxon>
        <taxon>Bacillati</taxon>
        <taxon>Actinomycetota</taxon>
        <taxon>Actinomycetes</taxon>
        <taxon>Mycobacteriales</taxon>
        <taxon>Mycobacteriaceae</taxon>
        <taxon>Mycobacterium</taxon>
    </lineage>
</organism>
<sequence length="170" mass="18618">MPKPTKGPRLGGSSSHQKALLTNLAASLFEHGRIKTTEPKARALRPYAEKLITHAKKGTLHNRREVLKKLPDKDVVHALFAEIGPFFSDRDGGYTRIIKVEARKGDNAPMAVIELVREKTVTSEADRARRVAAASAKAAQAQEKPAQEEEVEATSDEVAYTSEPDKAAEH</sequence>
<accession>B8ZSH5</accession>
<evidence type="ECO:0000255" key="1">
    <source>
        <dbReference type="HAMAP-Rule" id="MF_01368"/>
    </source>
</evidence>
<evidence type="ECO:0000256" key="2">
    <source>
        <dbReference type="SAM" id="MobiDB-lite"/>
    </source>
</evidence>
<evidence type="ECO:0000305" key="3"/>
<gene>
    <name evidence="1" type="primary">rplQ</name>
    <name type="ordered locus">MLBr01956</name>
</gene>
<name>RL17_MYCLB</name>
<reference key="1">
    <citation type="journal article" date="2009" name="Nat. Genet.">
        <title>Comparative genomic and phylogeographic analysis of Mycobacterium leprae.</title>
        <authorList>
            <person name="Monot M."/>
            <person name="Honore N."/>
            <person name="Garnier T."/>
            <person name="Zidane N."/>
            <person name="Sherafi D."/>
            <person name="Paniz-Mondolfi A."/>
            <person name="Matsuoka M."/>
            <person name="Taylor G.M."/>
            <person name="Donoghue H.D."/>
            <person name="Bouwman A."/>
            <person name="Mays S."/>
            <person name="Watson C."/>
            <person name="Lockwood D."/>
            <person name="Khamispour A."/>
            <person name="Dowlati Y."/>
            <person name="Jianping S."/>
            <person name="Rea T.H."/>
            <person name="Vera-Cabrera L."/>
            <person name="Stefani M.M."/>
            <person name="Banu S."/>
            <person name="Macdonald M."/>
            <person name="Sapkota B.R."/>
            <person name="Spencer J.S."/>
            <person name="Thomas J."/>
            <person name="Harshman K."/>
            <person name="Singh P."/>
            <person name="Busso P."/>
            <person name="Gattiker A."/>
            <person name="Rougemont J."/>
            <person name="Brennan P.J."/>
            <person name="Cole S.T."/>
        </authorList>
    </citation>
    <scope>NUCLEOTIDE SEQUENCE [LARGE SCALE GENOMIC DNA]</scope>
    <source>
        <strain>Br4923</strain>
    </source>
</reference>
<protein>
    <recommendedName>
        <fullName evidence="1">Large ribosomal subunit protein bL17</fullName>
    </recommendedName>
    <alternativeName>
        <fullName evidence="3">50S ribosomal protein L17</fullName>
    </alternativeName>
</protein>
<dbReference type="EMBL" id="FM211192">
    <property type="protein sequence ID" value="CAR72053.1"/>
    <property type="molecule type" value="Genomic_DNA"/>
</dbReference>
<dbReference type="SMR" id="B8ZSH5"/>
<dbReference type="KEGG" id="mlb:MLBr01956"/>
<dbReference type="HOGENOM" id="CLU_074407_0_0_11"/>
<dbReference type="Proteomes" id="UP000006900">
    <property type="component" value="Chromosome"/>
</dbReference>
<dbReference type="GO" id="GO:0022625">
    <property type="term" value="C:cytosolic large ribosomal subunit"/>
    <property type="evidence" value="ECO:0007669"/>
    <property type="project" value="TreeGrafter"/>
</dbReference>
<dbReference type="GO" id="GO:0003735">
    <property type="term" value="F:structural constituent of ribosome"/>
    <property type="evidence" value="ECO:0007669"/>
    <property type="project" value="InterPro"/>
</dbReference>
<dbReference type="GO" id="GO:0006412">
    <property type="term" value="P:translation"/>
    <property type="evidence" value="ECO:0007669"/>
    <property type="project" value="UniProtKB-UniRule"/>
</dbReference>
<dbReference type="FunFam" id="3.90.1030.10:FF:000001">
    <property type="entry name" value="50S ribosomal protein L17"/>
    <property type="match status" value="1"/>
</dbReference>
<dbReference type="Gene3D" id="3.90.1030.10">
    <property type="entry name" value="Ribosomal protein L17"/>
    <property type="match status" value="1"/>
</dbReference>
<dbReference type="HAMAP" id="MF_01368">
    <property type="entry name" value="Ribosomal_bL17"/>
    <property type="match status" value="1"/>
</dbReference>
<dbReference type="InterPro" id="IPR000456">
    <property type="entry name" value="Ribosomal_bL17"/>
</dbReference>
<dbReference type="InterPro" id="IPR047859">
    <property type="entry name" value="Ribosomal_bL17_CS"/>
</dbReference>
<dbReference type="InterPro" id="IPR036373">
    <property type="entry name" value="Ribosomal_bL17_sf"/>
</dbReference>
<dbReference type="NCBIfam" id="TIGR00059">
    <property type="entry name" value="L17"/>
    <property type="match status" value="1"/>
</dbReference>
<dbReference type="PANTHER" id="PTHR14413:SF16">
    <property type="entry name" value="LARGE RIBOSOMAL SUBUNIT PROTEIN BL17M"/>
    <property type="match status" value="1"/>
</dbReference>
<dbReference type="PANTHER" id="PTHR14413">
    <property type="entry name" value="RIBOSOMAL PROTEIN L17"/>
    <property type="match status" value="1"/>
</dbReference>
<dbReference type="Pfam" id="PF01196">
    <property type="entry name" value="Ribosomal_L17"/>
    <property type="match status" value="1"/>
</dbReference>
<dbReference type="SUPFAM" id="SSF64263">
    <property type="entry name" value="Prokaryotic ribosomal protein L17"/>
    <property type="match status" value="1"/>
</dbReference>
<dbReference type="PROSITE" id="PS01167">
    <property type="entry name" value="RIBOSOMAL_L17"/>
    <property type="match status" value="1"/>
</dbReference>
<keyword id="KW-0687">Ribonucleoprotein</keyword>
<keyword id="KW-0689">Ribosomal protein</keyword>
<feature type="chain" id="PRO_1000184034" description="Large ribosomal subunit protein bL17">
    <location>
        <begin position="1"/>
        <end position="170"/>
    </location>
</feature>
<feature type="region of interest" description="Disordered" evidence="2">
    <location>
        <begin position="134"/>
        <end position="170"/>
    </location>
</feature>
<feature type="compositionally biased region" description="Low complexity" evidence="2">
    <location>
        <begin position="134"/>
        <end position="144"/>
    </location>
</feature>